<accession>A0L5X4</accession>
<gene>
    <name evidence="1" type="primary">rplD</name>
    <name type="ordered locus">Mmc1_0848</name>
</gene>
<protein>
    <recommendedName>
        <fullName evidence="1">Large ribosomal subunit protein uL4</fullName>
    </recommendedName>
    <alternativeName>
        <fullName evidence="3">50S ribosomal protein L4</fullName>
    </alternativeName>
</protein>
<sequence length="207" mass="22854">MIQVPVKDANNQEVRSTELNESVFGREIRADLLGMAVNYQLAKRRLGTATVLGRSDVRGGGKKPYRQKGTGNARQGTIRAPQFRTGGIVFGPQQRDYSHKLNKKVRKLALQTALSVKASSEEMVVVDKLELASIKTKEMKALLSTLGAARSTFLVVKELSNEIVLSARNIPNVMVADVDGVNVYDLLRYEKLVITEEAVRSLEEKLA</sequence>
<name>RL4_MAGMM</name>
<proteinExistence type="inferred from homology"/>
<comment type="function">
    <text evidence="1">One of the primary rRNA binding proteins, this protein initially binds near the 5'-end of the 23S rRNA. It is important during the early stages of 50S assembly. It makes multiple contacts with different domains of the 23S rRNA in the assembled 50S subunit and ribosome.</text>
</comment>
<comment type="function">
    <text evidence="1">Forms part of the polypeptide exit tunnel.</text>
</comment>
<comment type="subunit">
    <text evidence="1">Part of the 50S ribosomal subunit.</text>
</comment>
<comment type="similarity">
    <text evidence="1">Belongs to the universal ribosomal protein uL4 family.</text>
</comment>
<keyword id="KW-1185">Reference proteome</keyword>
<keyword id="KW-0687">Ribonucleoprotein</keyword>
<keyword id="KW-0689">Ribosomal protein</keyword>
<keyword id="KW-0694">RNA-binding</keyword>
<keyword id="KW-0699">rRNA-binding</keyword>
<dbReference type="EMBL" id="CP000471">
    <property type="protein sequence ID" value="ABK43367.1"/>
    <property type="molecule type" value="Genomic_DNA"/>
</dbReference>
<dbReference type="RefSeq" id="WP_011712526.1">
    <property type="nucleotide sequence ID" value="NC_008576.1"/>
</dbReference>
<dbReference type="SMR" id="A0L5X4"/>
<dbReference type="STRING" id="156889.Mmc1_0848"/>
<dbReference type="KEGG" id="mgm:Mmc1_0848"/>
<dbReference type="eggNOG" id="COG0088">
    <property type="taxonomic scope" value="Bacteria"/>
</dbReference>
<dbReference type="HOGENOM" id="CLU_041575_5_2_5"/>
<dbReference type="OrthoDB" id="9803201at2"/>
<dbReference type="Proteomes" id="UP000002586">
    <property type="component" value="Chromosome"/>
</dbReference>
<dbReference type="GO" id="GO:1990904">
    <property type="term" value="C:ribonucleoprotein complex"/>
    <property type="evidence" value="ECO:0007669"/>
    <property type="project" value="UniProtKB-KW"/>
</dbReference>
<dbReference type="GO" id="GO:0005840">
    <property type="term" value="C:ribosome"/>
    <property type="evidence" value="ECO:0007669"/>
    <property type="project" value="UniProtKB-KW"/>
</dbReference>
<dbReference type="GO" id="GO:0019843">
    <property type="term" value="F:rRNA binding"/>
    <property type="evidence" value="ECO:0007669"/>
    <property type="project" value="UniProtKB-UniRule"/>
</dbReference>
<dbReference type="GO" id="GO:0003735">
    <property type="term" value="F:structural constituent of ribosome"/>
    <property type="evidence" value="ECO:0007669"/>
    <property type="project" value="InterPro"/>
</dbReference>
<dbReference type="GO" id="GO:0006412">
    <property type="term" value="P:translation"/>
    <property type="evidence" value="ECO:0007669"/>
    <property type="project" value="UniProtKB-UniRule"/>
</dbReference>
<dbReference type="Gene3D" id="3.40.1370.10">
    <property type="match status" value="1"/>
</dbReference>
<dbReference type="HAMAP" id="MF_01328_B">
    <property type="entry name" value="Ribosomal_uL4_B"/>
    <property type="match status" value="1"/>
</dbReference>
<dbReference type="InterPro" id="IPR002136">
    <property type="entry name" value="Ribosomal_uL4"/>
</dbReference>
<dbReference type="InterPro" id="IPR013005">
    <property type="entry name" value="Ribosomal_uL4-like"/>
</dbReference>
<dbReference type="InterPro" id="IPR023574">
    <property type="entry name" value="Ribosomal_uL4_dom_sf"/>
</dbReference>
<dbReference type="NCBIfam" id="TIGR03953">
    <property type="entry name" value="rplD_bact"/>
    <property type="match status" value="1"/>
</dbReference>
<dbReference type="PANTHER" id="PTHR10746">
    <property type="entry name" value="50S RIBOSOMAL PROTEIN L4"/>
    <property type="match status" value="1"/>
</dbReference>
<dbReference type="PANTHER" id="PTHR10746:SF6">
    <property type="entry name" value="LARGE RIBOSOMAL SUBUNIT PROTEIN UL4M"/>
    <property type="match status" value="1"/>
</dbReference>
<dbReference type="Pfam" id="PF00573">
    <property type="entry name" value="Ribosomal_L4"/>
    <property type="match status" value="1"/>
</dbReference>
<dbReference type="SUPFAM" id="SSF52166">
    <property type="entry name" value="Ribosomal protein L4"/>
    <property type="match status" value="1"/>
</dbReference>
<feature type="chain" id="PRO_1000052433" description="Large ribosomal subunit protein uL4">
    <location>
        <begin position="1"/>
        <end position="207"/>
    </location>
</feature>
<feature type="region of interest" description="Disordered" evidence="2">
    <location>
        <begin position="54"/>
        <end position="74"/>
    </location>
</feature>
<organism>
    <name type="scientific">Magnetococcus marinus (strain ATCC BAA-1437 / JCM 17883 / MC-1)</name>
    <dbReference type="NCBI Taxonomy" id="156889"/>
    <lineage>
        <taxon>Bacteria</taxon>
        <taxon>Pseudomonadati</taxon>
        <taxon>Pseudomonadota</taxon>
        <taxon>Alphaproteobacteria</taxon>
        <taxon>Magnetococcales</taxon>
        <taxon>Magnetococcaceae</taxon>
        <taxon>Magnetococcus</taxon>
    </lineage>
</organism>
<reference key="1">
    <citation type="journal article" date="2009" name="Appl. Environ. Microbiol.">
        <title>Complete genome sequence of the chemolithoautotrophic marine magnetotactic coccus strain MC-1.</title>
        <authorList>
            <person name="Schubbe S."/>
            <person name="Williams T.J."/>
            <person name="Xie G."/>
            <person name="Kiss H.E."/>
            <person name="Brettin T.S."/>
            <person name="Martinez D."/>
            <person name="Ross C.A."/>
            <person name="Schuler D."/>
            <person name="Cox B.L."/>
            <person name="Nealson K.H."/>
            <person name="Bazylinski D.A."/>
        </authorList>
    </citation>
    <scope>NUCLEOTIDE SEQUENCE [LARGE SCALE GENOMIC DNA]</scope>
    <source>
        <strain>ATCC BAA-1437 / JCM 17883 / MC-1</strain>
    </source>
</reference>
<evidence type="ECO:0000255" key="1">
    <source>
        <dbReference type="HAMAP-Rule" id="MF_01328"/>
    </source>
</evidence>
<evidence type="ECO:0000256" key="2">
    <source>
        <dbReference type="SAM" id="MobiDB-lite"/>
    </source>
</evidence>
<evidence type="ECO:0000305" key="3"/>